<protein>
    <recommendedName>
        <fullName evidence="1">Inner membrane-spanning protein YciB</fullName>
    </recommendedName>
</protein>
<organism>
    <name type="scientific">Polynucleobacter asymbioticus (strain DSM 18221 / CIP 109841 / QLW-P1DMWA-1)</name>
    <name type="common">Polynucleobacter necessarius subsp. asymbioticus</name>
    <dbReference type="NCBI Taxonomy" id="312153"/>
    <lineage>
        <taxon>Bacteria</taxon>
        <taxon>Pseudomonadati</taxon>
        <taxon>Pseudomonadota</taxon>
        <taxon>Betaproteobacteria</taxon>
        <taxon>Burkholderiales</taxon>
        <taxon>Burkholderiaceae</taxon>
        <taxon>Polynucleobacter</taxon>
    </lineage>
</organism>
<gene>
    <name evidence="1" type="primary">yciB</name>
    <name type="ordered locus">Pnuc_0973</name>
</gene>
<evidence type="ECO:0000255" key="1">
    <source>
        <dbReference type="HAMAP-Rule" id="MF_00189"/>
    </source>
</evidence>
<name>YCIB_POLAQ</name>
<dbReference type="EMBL" id="CP000655">
    <property type="protein sequence ID" value="ABP34189.1"/>
    <property type="molecule type" value="Genomic_DNA"/>
</dbReference>
<dbReference type="RefSeq" id="WP_011902814.1">
    <property type="nucleotide sequence ID" value="NC_009379.1"/>
</dbReference>
<dbReference type="GeneID" id="31481344"/>
<dbReference type="KEGG" id="pnu:Pnuc_0973"/>
<dbReference type="eggNOG" id="COG2917">
    <property type="taxonomic scope" value="Bacteria"/>
</dbReference>
<dbReference type="HOGENOM" id="CLU_089554_2_0_4"/>
<dbReference type="Proteomes" id="UP000000231">
    <property type="component" value="Chromosome"/>
</dbReference>
<dbReference type="GO" id="GO:0005886">
    <property type="term" value="C:plasma membrane"/>
    <property type="evidence" value="ECO:0007669"/>
    <property type="project" value="UniProtKB-SubCell"/>
</dbReference>
<dbReference type="HAMAP" id="MF_00189">
    <property type="entry name" value="YciB"/>
    <property type="match status" value="1"/>
</dbReference>
<dbReference type="InterPro" id="IPR006008">
    <property type="entry name" value="YciB"/>
</dbReference>
<dbReference type="NCBIfam" id="TIGR00997">
    <property type="entry name" value="ispZ"/>
    <property type="match status" value="1"/>
</dbReference>
<dbReference type="NCBIfam" id="NF001325">
    <property type="entry name" value="PRK00259.1-3"/>
    <property type="match status" value="1"/>
</dbReference>
<dbReference type="PANTHER" id="PTHR36917:SF1">
    <property type="entry name" value="INNER MEMBRANE-SPANNING PROTEIN YCIB"/>
    <property type="match status" value="1"/>
</dbReference>
<dbReference type="PANTHER" id="PTHR36917">
    <property type="entry name" value="INTRACELLULAR SEPTATION PROTEIN A-RELATED"/>
    <property type="match status" value="1"/>
</dbReference>
<dbReference type="Pfam" id="PF04279">
    <property type="entry name" value="IspA"/>
    <property type="match status" value="1"/>
</dbReference>
<comment type="function">
    <text evidence="1">Plays a role in cell envelope biogenesis, maintenance of cell envelope integrity and membrane homeostasis.</text>
</comment>
<comment type="subcellular location">
    <subcellularLocation>
        <location evidence="1">Cell inner membrane</location>
        <topology evidence="1">Multi-pass membrane protein</topology>
    </subcellularLocation>
</comment>
<comment type="similarity">
    <text evidence="1">Belongs to the YciB family.</text>
</comment>
<reference key="1">
    <citation type="journal article" date="2012" name="Stand. Genomic Sci.">
        <title>Complete genome sequence of Polynucleobacter necessarius subsp. asymbioticus type strain (QLW-P1DMWA-1(T)).</title>
        <authorList>
            <person name="Meincke L."/>
            <person name="Copeland A."/>
            <person name="Lapidus A."/>
            <person name="Lucas S."/>
            <person name="Berry K.W."/>
            <person name="Del Rio T.G."/>
            <person name="Hammon N."/>
            <person name="Dalin E."/>
            <person name="Tice H."/>
            <person name="Pitluck S."/>
            <person name="Richardson P."/>
            <person name="Bruce D."/>
            <person name="Goodwin L."/>
            <person name="Han C."/>
            <person name="Tapia R."/>
            <person name="Detter J.C."/>
            <person name="Schmutz J."/>
            <person name="Brettin T."/>
            <person name="Larimer F."/>
            <person name="Land M."/>
            <person name="Hauser L."/>
            <person name="Kyrpides N.C."/>
            <person name="Ivanova N."/>
            <person name="Goker M."/>
            <person name="Woyke T."/>
            <person name="Wu Q.L."/>
            <person name="Pockl M."/>
            <person name="Hahn M.W."/>
            <person name="Klenk H.P."/>
        </authorList>
    </citation>
    <scope>NUCLEOTIDE SEQUENCE [LARGE SCALE GENOMIC DNA]</scope>
    <source>
        <strain>DSM 18221 / CIP 109841 / QLW-P1DMWA-1</strain>
    </source>
</reference>
<accession>A4SXH5</accession>
<feature type="chain" id="PRO_1000077489" description="Inner membrane-spanning protein YciB">
    <location>
        <begin position="1"/>
        <end position="182"/>
    </location>
</feature>
<feature type="transmembrane region" description="Helical" evidence="1">
    <location>
        <begin position="20"/>
        <end position="42"/>
    </location>
</feature>
<feature type="transmembrane region" description="Helical" evidence="1">
    <location>
        <begin position="55"/>
        <end position="75"/>
    </location>
</feature>
<feature type="transmembrane region" description="Helical" evidence="1">
    <location>
        <begin position="76"/>
        <end position="96"/>
    </location>
</feature>
<feature type="transmembrane region" description="Helical" evidence="1">
    <location>
        <begin position="123"/>
        <end position="143"/>
    </location>
</feature>
<feature type="transmembrane region" description="Helical" evidence="1">
    <location>
        <begin position="153"/>
        <end position="173"/>
    </location>
</feature>
<sequence length="182" mass="21420">MKFLFDLFPIILFFIAYKFGGIYQATIVAMVATIVQILWVYYRHRKIDAMQWVSLIMIMVFGSLTIFLHDSTFILLKPTALYWLFSGVLFVSAQFFNKNWIQVLMGKQITLKPTHAHTVWHQLNLAWSAFFFFMGFLNLYIAFEYSEETWVNFKLFGSTGLLIAFVIAQGFWMSRHIEHPAE</sequence>
<keyword id="KW-0997">Cell inner membrane</keyword>
<keyword id="KW-1003">Cell membrane</keyword>
<keyword id="KW-0472">Membrane</keyword>
<keyword id="KW-1185">Reference proteome</keyword>
<keyword id="KW-0812">Transmembrane</keyword>
<keyword id="KW-1133">Transmembrane helix</keyword>
<proteinExistence type="inferred from homology"/>